<name>Y818_DROME</name>
<feature type="chain" id="PRO_0000174339" description="Uncharacterized protein CG42266">
    <location>
        <begin position="1"/>
        <end position="571"/>
    </location>
</feature>
<feature type="region of interest" description="Disordered" evidence="1">
    <location>
        <begin position="71"/>
        <end position="128"/>
    </location>
</feature>
<feature type="region of interest" description="Disordered" evidence="1">
    <location>
        <begin position="142"/>
        <end position="258"/>
    </location>
</feature>
<feature type="region of interest" description="Disordered" evidence="1">
    <location>
        <begin position="298"/>
        <end position="336"/>
    </location>
</feature>
<feature type="compositionally biased region" description="Polar residues" evidence="1">
    <location>
        <begin position="88"/>
        <end position="113"/>
    </location>
</feature>
<feature type="compositionally biased region" description="Pro residues" evidence="1">
    <location>
        <begin position="168"/>
        <end position="184"/>
    </location>
</feature>
<feature type="compositionally biased region" description="Low complexity" evidence="1">
    <location>
        <begin position="205"/>
        <end position="215"/>
    </location>
</feature>
<feature type="compositionally biased region" description="Gly residues" evidence="1">
    <location>
        <begin position="217"/>
        <end position="234"/>
    </location>
</feature>
<feature type="compositionally biased region" description="Low complexity" evidence="1">
    <location>
        <begin position="311"/>
        <end position="326"/>
    </location>
</feature>
<feature type="sequence conflict" description="In Ref. 4; AAV37024." evidence="2" ref="4">
    <original>W</original>
    <variation>F</variation>
    <location>
        <position position="155"/>
    </location>
</feature>
<feature type="sequence conflict" description="In Ref. 4; AAV37024." evidence="2" ref="4">
    <original>V</original>
    <variation>I</variation>
    <location>
        <position position="164"/>
    </location>
</feature>
<feature type="sequence conflict" description="In Ref. 4; AAV37024." evidence="2" ref="4">
    <original>R</original>
    <variation>RGYPGPGPRGYPGRGPR</variation>
    <location>
        <position position="184"/>
    </location>
</feature>
<feature type="sequence conflict" description="In Ref. 4; AAV37024." evidence="2" ref="4">
    <original>R</original>
    <variation>P</variation>
    <location>
        <position position="189"/>
    </location>
</feature>
<feature type="sequence conflict" description="In Ref. 4; AAV37024." evidence="2" ref="4">
    <original>R</original>
    <variation>T</variation>
    <location>
        <position position="364"/>
    </location>
</feature>
<feature type="sequence conflict" description="In Ref. 4; AAV37024." evidence="2" ref="4">
    <original>V</original>
    <variation>L</variation>
    <location>
        <position position="375"/>
    </location>
</feature>
<feature type="sequence conflict" description="In Ref. 4; AAV37024." evidence="2" ref="4">
    <original>Y</original>
    <variation>F</variation>
    <location>
        <position position="498"/>
    </location>
</feature>
<feature type="sequence conflict" description="In Ref. 4; AAV37024." evidence="2" ref="4">
    <original>G</original>
    <variation>S</variation>
    <location>
        <position position="522"/>
    </location>
</feature>
<keyword id="KW-1185">Reference proteome</keyword>
<evidence type="ECO:0000256" key="1">
    <source>
        <dbReference type="SAM" id="MobiDB-lite"/>
    </source>
</evidence>
<evidence type="ECO:0000305" key="2"/>
<gene>
    <name type="ORF">CG42266</name>
</gene>
<organism>
    <name type="scientific">Drosophila melanogaster</name>
    <name type="common">Fruit fly</name>
    <dbReference type="NCBI Taxonomy" id="7227"/>
    <lineage>
        <taxon>Eukaryota</taxon>
        <taxon>Metazoa</taxon>
        <taxon>Ecdysozoa</taxon>
        <taxon>Arthropoda</taxon>
        <taxon>Hexapoda</taxon>
        <taxon>Insecta</taxon>
        <taxon>Pterygota</taxon>
        <taxon>Neoptera</taxon>
        <taxon>Endopterygota</taxon>
        <taxon>Diptera</taxon>
        <taxon>Brachycera</taxon>
        <taxon>Muscomorpha</taxon>
        <taxon>Ephydroidea</taxon>
        <taxon>Drosophilidae</taxon>
        <taxon>Drosophila</taxon>
        <taxon>Sophophora</taxon>
    </lineage>
</organism>
<accession>P83474</accession>
<accession>B7YZY8</accession>
<accession>P83475</accession>
<accession>Q5U0V3</accession>
<accession>Q9NK55</accession>
<accession>Q9VJL2</accession>
<sequence length="571" mass="63166">MFCEKPTEKREKSPCRCKNCVLRHSDFLPWPEPIGFTSDRKTDKDNNNHISTLQSVESVVTISDVNERHTTNHYKNHQSNPDEIAYTPNRSGVSSPVNDGASSPTQRGGTTPAPQGGKGGNSPSRVTAQPQAQPTILLIVVNKNDPPPYGQGQSWEYPGQQYSVPGPRGYPGPGPRGYPGPGPRGYPGRGPRGYPGPGPRGYPGQGPRRYSCPGPRGYPGPGSSGRPDPGGGLQGYYYPPSGPGNGTGPSGRPRPQNENEYAYYDRRRYSEAYQNNRNDWRGQPRGYYDGAYAEEHNLNRQPETRRNCQCPEKQQTPPPEETQNAQENDDQQTTKRKSFKRLVGMGVGNTCSCQGPSLMGSNLRSLGNEMDNQEVGRSGNMGTPPNTMEYLSERGSPPEIREVTVTDAKNKTYKCIQVPICISTGKANTCRCCKCAPSPDAENDESFDEDAECICNHEGKCTCVAGNEFPTEFGCECDLTNLEQTLRELIPNAECICYLKKKKRRRKRKKWAPKVYYDRFAGPPFVLNPKPRCLDYGRSPFCNPCYNPCSCAPFAKSCYTCDYNCEGCGRF</sequence>
<proteinExistence type="evidence at transcript level"/>
<dbReference type="EMBL" id="AE014134">
    <property type="protein sequence ID" value="ACL83033.1"/>
    <property type="molecule type" value="Genomic_DNA"/>
</dbReference>
<dbReference type="EMBL" id="BT016139">
    <property type="protein sequence ID" value="AAV37024.1"/>
    <property type="molecule type" value="mRNA"/>
</dbReference>
<dbReference type="RefSeq" id="NP_001137827.1">
    <property type="nucleotide sequence ID" value="NM_001144355.2"/>
</dbReference>
<dbReference type="STRING" id="7227.FBpp0288874"/>
<dbReference type="PaxDb" id="7227-FBpp0302857"/>
<dbReference type="EnsemblMetazoa" id="FBtr0299599">
    <property type="protein sequence ID" value="FBpp0288874"/>
    <property type="gene ID" value="FBgn0259151"/>
</dbReference>
<dbReference type="GeneID" id="7354431"/>
<dbReference type="KEGG" id="dme:Dmel_CG42266"/>
<dbReference type="UCSC" id="CG42266-RA">
    <property type="organism name" value="d. melanogaster"/>
</dbReference>
<dbReference type="AGR" id="FB:FBgn0259151"/>
<dbReference type="FlyBase" id="FBgn0259151">
    <property type="gene designation" value="CG42266"/>
</dbReference>
<dbReference type="VEuPathDB" id="VectorBase:FBgn0259151"/>
<dbReference type="eggNOG" id="ENOG502R8C3">
    <property type="taxonomic scope" value="Eukaryota"/>
</dbReference>
<dbReference type="HOGENOM" id="CLU_477579_0_0_1"/>
<dbReference type="InParanoid" id="P83474"/>
<dbReference type="OMA" id="IPNTDCM"/>
<dbReference type="OrthoDB" id="7873202at2759"/>
<dbReference type="PhylomeDB" id="P83474"/>
<dbReference type="BioGRID-ORCS" id="7354431">
    <property type="hits" value="0 hits in 1 CRISPR screen"/>
</dbReference>
<dbReference type="ChiTaRS" id="CG42266">
    <property type="organism name" value="fly"/>
</dbReference>
<dbReference type="GenomeRNAi" id="7354431"/>
<dbReference type="PRO" id="PR:P83474"/>
<dbReference type="Proteomes" id="UP000000803">
    <property type="component" value="Chromosome 2L"/>
</dbReference>
<dbReference type="Bgee" id="FBgn0259151">
    <property type="expression patterns" value="Expressed in mid-late elongation-stage spermatid (Drosophila) in testis and 19 other cell types or tissues"/>
</dbReference>
<protein>
    <recommendedName>
        <fullName>Uncharacterized protein CG42266</fullName>
    </recommendedName>
</protein>
<reference key="1">
    <citation type="journal article" date="1999" name="Genetics">
        <title>An exploration of the sequence of a 2.9-Mb region of the genome of Drosophila melanogaster: the Adh region.</title>
        <authorList>
            <person name="Ashburner M."/>
            <person name="Misra S."/>
            <person name="Roote J."/>
            <person name="Lewis S.E."/>
            <person name="Blazej R.G."/>
            <person name="Davis T."/>
            <person name="Doyle C."/>
            <person name="Galle R.F."/>
            <person name="George R.A."/>
            <person name="Harris N.L."/>
            <person name="Hartzell G."/>
            <person name="Harvey D.A."/>
            <person name="Hong L."/>
            <person name="Houston K.A."/>
            <person name="Hoskins R.A."/>
            <person name="Johnson G."/>
            <person name="Martin C."/>
            <person name="Moshrefi A.R."/>
            <person name="Palazzolo M."/>
            <person name="Reese M.G."/>
            <person name="Spradling A.C."/>
            <person name="Tsang G."/>
            <person name="Wan K.H."/>
            <person name="Whitelaw K."/>
            <person name="Celniker S.E."/>
            <person name="Rubin G.M."/>
        </authorList>
    </citation>
    <scope>NUCLEOTIDE SEQUENCE [LARGE SCALE GENOMIC DNA]</scope>
    <source>
        <strain>Berkeley</strain>
    </source>
</reference>
<reference key="2">
    <citation type="journal article" date="2000" name="Science">
        <title>The genome sequence of Drosophila melanogaster.</title>
        <authorList>
            <person name="Adams M.D."/>
            <person name="Celniker S.E."/>
            <person name="Holt R.A."/>
            <person name="Evans C.A."/>
            <person name="Gocayne J.D."/>
            <person name="Amanatides P.G."/>
            <person name="Scherer S.E."/>
            <person name="Li P.W."/>
            <person name="Hoskins R.A."/>
            <person name="Galle R.F."/>
            <person name="George R.A."/>
            <person name="Lewis S.E."/>
            <person name="Richards S."/>
            <person name="Ashburner M."/>
            <person name="Henderson S.N."/>
            <person name="Sutton G.G."/>
            <person name="Wortman J.R."/>
            <person name="Yandell M.D."/>
            <person name="Zhang Q."/>
            <person name="Chen L.X."/>
            <person name="Brandon R.C."/>
            <person name="Rogers Y.-H.C."/>
            <person name="Blazej R.G."/>
            <person name="Champe M."/>
            <person name="Pfeiffer B.D."/>
            <person name="Wan K.H."/>
            <person name="Doyle C."/>
            <person name="Baxter E.G."/>
            <person name="Helt G."/>
            <person name="Nelson C.R."/>
            <person name="Miklos G.L.G."/>
            <person name="Abril J.F."/>
            <person name="Agbayani A."/>
            <person name="An H.-J."/>
            <person name="Andrews-Pfannkoch C."/>
            <person name="Baldwin D."/>
            <person name="Ballew R.M."/>
            <person name="Basu A."/>
            <person name="Baxendale J."/>
            <person name="Bayraktaroglu L."/>
            <person name="Beasley E.M."/>
            <person name="Beeson K.Y."/>
            <person name="Benos P.V."/>
            <person name="Berman B.P."/>
            <person name="Bhandari D."/>
            <person name="Bolshakov S."/>
            <person name="Borkova D."/>
            <person name="Botchan M.R."/>
            <person name="Bouck J."/>
            <person name="Brokstein P."/>
            <person name="Brottier P."/>
            <person name="Burtis K.C."/>
            <person name="Busam D.A."/>
            <person name="Butler H."/>
            <person name="Cadieu E."/>
            <person name="Center A."/>
            <person name="Chandra I."/>
            <person name="Cherry J.M."/>
            <person name="Cawley S."/>
            <person name="Dahlke C."/>
            <person name="Davenport L.B."/>
            <person name="Davies P."/>
            <person name="de Pablos B."/>
            <person name="Delcher A."/>
            <person name="Deng Z."/>
            <person name="Mays A.D."/>
            <person name="Dew I."/>
            <person name="Dietz S.M."/>
            <person name="Dodson K."/>
            <person name="Doup L.E."/>
            <person name="Downes M."/>
            <person name="Dugan-Rocha S."/>
            <person name="Dunkov B.C."/>
            <person name="Dunn P."/>
            <person name="Durbin K.J."/>
            <person name="Evangelista C.C."/>
            <person name="Ferraz C."/>
            <person name="Ferriera S."/>
            <person name="Fleischmann W."/>
            <person name="Fosler C."/>
            <person name="Gabrielian A.E."/>
            <person name="Garg N.S."/>
            <person name="Gelbart W.M."/>
            <person name="Glasser K."/>
            <person name="Glodek A."/>
            <person name="Gong F."/>
            <person name="Gorrell J.H."/>
            <person name="Gu Z."/>
            <person name="Guan P."/>
            <person name="Harris M."/>
            <person name="Harris N.L."/>
            <person name="Harvey D.A."/>
            <person name="Heiman T.J."/>
            <person name="Hernandez J.R."/>
            <person name="Houck J."/>
            <person name="Hostin D."/>
            <person name="Houston K.A."/>
            <person name="Howland T.J."/>
            <person name="Wei M.-H."/>
            <person name="Ibegwam C."/>
            <person name="Jalali M."/>
            <person name="Kalush F."/>
            <person name="Karpen G.H."/>
            <person name="Ke Z."/>
            <person name="Kennison J.A."/>
            <person name="Ketchum K.A."/>
            <person name="Kimmel B.E."/>
            <person name="Kodira C.D."/>
            <person name="Kraft C.L."/>
            <person name="Kravitz S."/>
            <person name="Kulp D."/>
            <person name="Lai Z."/>
            <person name="Lasko P."/>
            <person name="Lei Y."/>
            <person name="Levitsky A.A."/>
            <person name="Li J.H."/>
            <person name="Li Z."/>
            <person name="Liang Y."/>
            <person name="Lin X."/>
            <person name="Liu X."/>
            <person name="Mattei B."/>
            <person name="McIntosh T.C."/>
            <person name="McLeod M.P."/>
            <person name="McPherson D."/>
            <person name="Merkulov G."/>
            <person name="Milshina N.V."/>
            <person name="Mobarry C."/>
            <person name="Morris J."/>
            <person name="Moshrefi A."/>
            <person name="Mount S.M."/>
            <person name="Moy M."/>
            <person name="Murphy B."/>
            <person name="Murphy L."/>
            <person name="Muzny D.M."/>
            <person name="Nelson D.L."/>
            <person name="Nelson D.R."/>
            <person name="Nelson K.A."/>
            <person name="Nixon K."/>
            <person name="Nusskern D.R."/>
            <person name="Pacleb J.M."/>
            <person name="Palazzolo M."/>
            <person name="Pittman G.S."/>
            <person name="Pan S."/>
            <person name="Pollard J."/>
            <person name="Puri V."/>
            <person name="Reese M.G."/>
            <person name="Reinert K."/>
            <person name="Remington K."/>
            <person name="Saunders R.D.C."/>
            <person name="Scheeler F."/>
            <person name="Shen H."/>
            <person name="Shue B.C."/>
            <person name="Siden-Kiamos I."/>
            <person name="Simpson M."/>
            <person name="Skupski M.P."/>
            <person name="Smith T.J."/>
            <person name="Spier E."/>
            <person name="Spradling A.C."/>
            <person name="Stapleton M."/>
            <person name="Strong R."/>
            <person name="Sun E."/>
            <person name="Svirskas R."/>
            <person name="Tector C."/>
            <person name="Turner R."/>
            <person name="Venter E."/>
            <person name="Wang A.H."/>
            <person name="Wang X."/>
            <person name="Wang Z.-Y."/>
            <person name="Wassarman D.A."/>
            <person name="Weinstock G.M."/>
            <person name="Weissenbach J."/>
            <person name="Williams S.M."/>
            <person name="Woodage T."/>
            <person name="Worley K.C."/>
            <person name="Wu D."/>
            <person name="Yang S."/>
            <person name="Yao Q.A."/>
            <person name="Ye J."/>
            <person name="Yeh R.-F."/>
            <person name="Zaveri J.S."/>
            <person name="Zhan M."/>
            <person name="Zhang G."/>
            <person name="Zhao Q."/>
            <person name="Zheng L."/>
            <person name="Zheng X.H."/>
            <person name="Zhong F.N."/>
            <person name="Zhong W."/>
            <person name="Zhou X."/>
            <person name="Zhu S.C."/>
            <person name="Zhu X."/>
            <person name="Smith H.O."/>
            <person name="Gibbs R.A."/>
            <person name="Myers E.W."/>
            <person name="Rubin G.M."/>
            <person name="Venter J.C."/>
        </authorList>
    </citation>
    <scope>NUCLEOTIDE SEQUENCE [LARGE SCALE GENOMIC DNA]</scope>
    <source>
        <strain>Berkeley</strain>
    </source>
</reference>
<reference key="3">
    <citation type="journal article" date="2002" name="Genome Biol.">
        <title>Annotation of the Drosophila melanogaster euchromatic genome: a systematic review.</title>
        <authorList>
            <person name="Misra S."/>
            <person name="Crosby M.A."/>
            <person name="Mungall C.J."/>
            <person name="Matthews B.B."/>
            <person name="Campbell K.S."/>
            <person name="Hradecky P."/>
            <person name="Huang Y."/>
            <person name="Kaminker J.S."/>
            <person name="Millburn G.H."/>
            <person name="Prochnik S.E."/>
            <person name="Smith C.D."/>
            <person name="Tupy J.L."/>
            <person name="Whitfield E.J."/>
            <person name="Bayraktaroglu L."/>
            <person name="Berman B.P."/>
            <person name="Bettencourt B.R."/>
            <person name="Celniker S.E."/>
            <person name="de Grey A.D.N.J."/>
            <person name="Drysdale R.A."/>
            <person name="Harris N.L."/>
            <person name="Richter J."/>
            <person name="Russo S."/>
            <person name="Schroeder A.J."/>
            <person name="Shu S.Q."/>
            <person name="Stapleton M."/>
            <person name="Yamada C."/>
            <person name="Ashburner M."/>
            <person name="Gelbart W.M."/>
            <person name="Rubin G.M."/>
            <person name="Lewis S.E."/>
        </authorList>
    </citation>
    <scope>GENOME REANNOTATION</scope>
    <source>
        <strain>Berkeley</strain>
    </source>
</reference>
<reference key="4">
    <citation type="submission" date="2004-10" db="EMBL/GenBank/DDBJ databases">
        <authorList>
            <person name="Stapleton M."/>
            <person name="Carlson J.W."/>
            <person name="Chavez C."/>
            <person name="Frise E."/>
            <person name="George R.A."/>
            <person name="Pacleb J.M."/>
            <person name="Park S."/>
            <person name="Wan K.H."/>
            <person name="Yu C."/>
            <person name="Rubin G.M."/>
            <person name="Celniker S.E."/>
        </authorList>
    </citation>
    <scope>NUCLEOTIDE SEQUENCE [LARGE SCALE MRNA]</scope>
    <source>
        <strain>Berkeley</strain>
        <tissue>Testis</tissue>
    </source>
</reference>